<comment type="function">
    <text evidence="1">Catalytic subunit of DNA primase, an RNA polymerase that catalyzes the synthesis of short RNA molecules used as primers for DNA polymerase during DNA replication. The small subunit contains the primase catalytic core and has DNA synthesis activity on its own. Binding to the large subunit stabilizes and modulates the activity, increasing the rate of DNA synthesis while decreasing the length of the DNA fragments, and conferring RNA synthesis capability. The DNA polymerase activity may enable DNA primase to also catalyze primer extension after primer synthesis. May also play a role in DNA repair.</text>
</comment>
<comment type="cofactor">
    <cofactor evidence="1">
        <name>Mg(2+)</name>
        <dbReference type="ChEBI" id="CHEBI:18420"/>
    </cofactor>
    <cofactor evidence="1">
        <name>Mn(2+)</name>
        <dbReference type="ChEBI" id="CHEBI:29035"/>
    </cofactor>
</comment>
<comment type="subunit">
    <text evidence="1">Heterodimer of a small subunit (PriS) and a large subunit (PriL).</text>
</comment>
<comment type="similarity">
    <text evidence="1">Belongs to the eukaryotic-type primase small subunit family.</text>
</comment>
<feature type="chain" id="PRO_1000132346" description="DNA primase small subunit PriS">
    <location>
        <begin position="1"/>
        <end position="391"/>
    </location>
</feature>
<feature type="active site" evidence="1">
    <location>
        <position position="98"/>
    </location>
</feature>
<feature type="active site" evidence="1">
    <location>
        <position position="100"/>
    </location>
</feature>
<feature type="active site" evidence="1">
    <location>
        <position position="294"/>
    </location>
</feature>
<gene>
    <name evidence="1" type="primary">priS</name>
    <name type="synonym">priA</name>
    <name type="ordered locus">OE_3108F</name>
</gene>
<keyword id="KW-0235">DNA replication</keyword>
<keyword id="KW-0240">DNA-directed RNA polymerase</keyword>
<keyword id="KW-0460">Magnesium</keyword>
<keyword id="KW-0464">Manganese</keyword>
<keyword id="KW-0479">Metal-binding</keyword>
<keyword id="KW-0548">Nucleotidyltransferase</keyword>
<keyword id="KW-0639">Primosome</keyword>
<keyword id="KW-0804">Transcription</keyword>
<keyword id="KW-0808">Transferase</keyword>
<accession>B0R5P1</accession>
<dbReference type="EC" id="2.7.7.-" evidence="1"/>
<dbReference type="EMBL" id="AM774415">
    <property type="protein sequence ID" value="CAP14058.1"/>
    <property type="molecule type" value="Genomic_DNA"/>
</dbReference>
<dbReference type="RefSeq" id="WP_012289337.1">
    <property type="nucleotide sequence ID" value="NC_010364.1"/>
</dbReference>
<dbReference type="SMR" id="B0R5P1"/>
<dbReference type="EnsemblBacteria" id="CAP14058">
    <property type="protein sequence ID" value="CAP14058"/>
    <property type="gene ID" value="OE_3108F"/>
</dbReference>
<dbReference type="GeneID" id="68694182"/>
<dbReference type="KEGG" id="hsl:OE_3108F"/>
<dbReference type="HOGENOM" id="CLU_056123_1_0_2"/>
<dbReference type="PhylomeDB" id="B0R5P1"/>
<dbReference type="Proteomes" id="UP000001321">
    <property type="component" value="Chromosome"/>
</dbReference>
<dbReference type="GO" id="GO:0000428">
    <property type="term" value="C:DNA-directed RNA polymerase complex"/>
    <property type="evidence" value="ECO:0007669"/>
    <property type="project" value="UniProtKB-KW"/>
</dbReference>
<dbReference type="GO" id="GO:1990077">
    <property type="term" value="C:primosome complex"/>
    <property type="evidence" value="ECO:0007669"/>
    <property type="project" value="UniProtKB-KW"/>
</dbReference>
<dbReference type="GO" id="GO:0003899">
    <property type="term" value="F:DNA-directed RNA polymerase activity"/>
    <property type="evidence" value="ECO:0007669"/>
    <property type="project" value="InterPro"/>
</dbReference>
<dbReference type="GO" id="GO:0046872">
    <property type="term" value="F:metal ion binding"/>
    <property type="evidence" value="ECO:0007669"/>
    <property type="project" value="UniProtKB-KW"/>
</dbReference>
<dbReference type="GO" id="GO:0006269">
    <property type="term" value="P:DNA replication, synthesis of primer"/>
    <property type="evidence" value="ECO:0007669"/>
    <property type="project" value="UniProtKB-UniRule"/>
</dbReference>
<dbReference type="CDD" id="cd04860">
    <property type="entry name" value="AE_Prim_S"/>
    <property type="match status" value="1"/>
</dbReference>
<dbReference type="Gene3D" id="3.90.920.10">
    <property type="entry name" value="DNA primase, PRIM domain"/>
    <property type="match status" value="1"/>
</dbReference>
<dbReference type="HAMAP" id="MF_00700">
    <property type="entry name" value="DNA_primase_sml_arc"/>
    <property type="match status" value="1"/>
</dbReference>
<dbReference type="InterPro" id="IPR002755">
    <property type="entry name" value="DNA_primase_S"/>
</dbReference>
<dbReference type="InterPro" id="IPR014052">
    <property type="entry name" value="DNA_primase_ssu_euk/arc"/>
</dbReference>
<dbReference type="InterPro" id="IPR023639">
    <property type="entry name" value="DNA_primase_ssu_PriS"/>
</dbReference>
<dbReference type="NCBIfam" id="TIGR00335">
    <property type="entry name" value="primase_sml"/>
    <property type="match status" value="1"/>
</dbReference>
<dbReference type="NCBIfam" id="NF001639">
    <property type="entry name" value="PRK00419.1-1"/>
    <property type="match status" value="1"/>
</dbReference>
<dbReference type="PANTHER" id="PTHR10536">
    <property type="entry name" value="DNA PRIMASE SMALL SUBUNIT"/>
    <property type="match status" value="1"/>
</dbReference>
<dbReference type="Pfam" id="PF01896">
    <property type="entry name" value="DNA_primase_S"/>
    <property type="match status" value="1"/>
</dbReference>
<dbReference type="SUPFAM" id="SSF56747">
    <property type="entry name" value="Prim-pol domain"/>
    <property type="match status" value="1"/>
</dbReference>
<reference key="1">
    <citation type="journal article" date="2008" name="Genomics">
        <title>Evolution in the laboratory: the genome of Halobacterium salinarum strain R1 compared to that of strain NRC-1.</title>
        <authorList>
            <person name="Pfeiffer F."/>
            <person name="Schuster S.C."/>
            <person name="Broicher A."/>
            <person name="Falb M."/>
            <person name="Palm P."/>
            <person name="Rodewald K."/>
            <person name="Ruepp A."/>
            <person name="Soppa J."/>
            <person name="Tittor J."/>
            <person name="Oesterhelt D."/>
        </authorList>
    </citation>
    <scope>NUCLEOTIDE SEQUENCE [LARGE SCALE GENOMIC DNA]</scope>
    <source>
        <strain>ATCC 29341 / DSM 671 / R1</strain>
    </source>
</reference>
<proteinExistence type="inferred from homology"/>
<protein>
    <recommendedName>
        <fullName evidence="1">DNA primase small subunit PriS</fullName>
        <ecNumber evidence="1">2.7.7.-</ecNumber>
    </recommendedName>
</protein>
<name>PRIS_HALS3</name>
<organism>
    <name type="scientific">Halobacterium salinarum (strain ATCC 29341 / DSM 671 / R1)</name>
    <dbReference type="NCBI Taxonomy" id="478009"/>
    <lineage>
        <taxon>Archaea</taxon>
        <taxon>Methanobacteriati</taxon>
        <taxon>Methanobacteriota</taxon>
        <taxon>Stenosarchaea group</taxon>
        <taxon>Halobacteria</taxon>
        <taxon>Halobacteriales</taxon>
        <taxon>Halobacteriaceae</taxon>
        <taxon>Halobacterium</taxon>
        <taxon>Halobacterium salinarum NRC-34001</taxon>
    </lineage>
</organism>
<evidence type="ECO:0000255" key="1">
    <source>
        <dbReference type="HAMAP-Rule" id="MF_00700"/>
    </source>
</evidence>
<sequence length="391" mass="43350">MEERTRAYLRGRFGDVYRRAEIDLPPRADDREWGYIPWTAGPDTTMVRHKSTLDLGSMTSFLERKCPRHVYFSAGTYDAPGAATMDEKHWQGSDLVFDLDADHLPRVTLGEDSYAEMLSKCKDALLRLLDFLERDFGFEELTVTFSGGRGYHVHVRDAGVYELGSEERREIVDYVRGNDLALETLVEAEPVGGRGLENPTEKRMLPADGGWGRRVTTRLEAFADDLIERGEDDAVATLTEFDGVGERSARAIYNVVADNTTAVKRGNVDVHPAFLTVARRYIDETVAAEQAPIDEPVTTDTNRLIRLPGSLHGGSGLEVQRLDRAALDDFDPLVDAVPETFVGHDITVELPTEHTVELRGESLTVGPGVSTVPEYAGVFMMARGTAEKATE</sequence>